<keyword id="KW-1185">Reference proteome</keyword>
<keyword id="KW-0694">RNA-binding</keyword>
<keyword id="KW-0346">Stress response</keyword>
<protein>
    <recommendedName>
        <fullName evidence="1">RNA-binding protein Hfq</fullName>
    </recommendedName>
</protein>
<feature type="chain" id="PRO_1000190366" description="RNA-binding protein Hfq">
    <location>
        <begin position="1"/>
        <end position="84"/>
    </location>
</feature>
<feature type="domain" description="Sm" evidence="2">
    <location>
        <begin position="9"/>
        <end position="69"/>
    </location>
</feature>
<gene>
    <name evidence="1" type="primary">hfq</name>
    <name type="ordered locus">THA_104</name>
</gene>
<proteinExistence type="inferred from homology"/>
<reference key="1">
    <citation type="journal article" date="2009" name="J. Bacteriol.">
        <title>The genome of Thermosipho africanus TCF52B: lateral genetic connections to the Firmicutes and Archaea.</title>
        <authorList>
            <person name="Nesboe C.L."/>
            <person name="Bapteste E."/>
            <person name="Curtis B."/>
            <person name="Dahle H."/>
            <person name="Lopez P."/>
            <person name="Macleod D."/>
            <person name="Dlutek M."/>
            <person name="Bowman S."/>
            <person name="Zhaxybayeva O."/>
            <person name="Birkeland N.-K."/>
            <person name="Doolittle W.F."/>
        </authorList>
    </citation>
    <scope>NUCLEOTIDE SEQUENCE [LARGE SCALE GENOMIC DNA]</scope>
    <source>
        <strain>TCF52B</strain>
    </source>
</reference>
<name>HFQ_THEAB</name>
<organism>
    <name type="scientific">Thermosipho africanus (strain TCF52B)</name>
    <dbReference type="NCBI Taxonomy" id="484019"/>
    <lineage>
        <taxon>Bacteria</taxon>
        <taxon>Thermotogati</taxon>
        <taxon>Thermotogota</taxon>
        <taxon>Thermotogae</taxon>
        <taxon>Thermotogales</taxon>
        <taxon>Fervidobacteriaceae</taxon>
        <taxon>Thermosipho</taxon>
    </lineage>
</organism>
<accession>B7IEU8</accession>
<dbReference type="EMBL" id="CP001185">
    <property type="protein sequence ID" value="ACJ74612.1"/>
    <property type="molecule type" value="Genomic_DNA"/>
</dbReference>
<dbReference type="RefSeq" id="WP_004103489.1">
    <property type="nucleotide sequence ID" value="NC_011653.1"/>
</dbReference>
<dbReference type="SMR" id="B7IEU8"/>
<dbReference type="STRING" id="484019.THA_104"/>
<dbReference type="KEGG" id="taf:THA_104"/>
<dbReference type="eggNOG" id="COG1923">
    <property type="taxonomic scope" value="Bacteria"/>
</dbReference>
<dbReference type="HOGENOM" id="CLU_113688_0_2_0"/>
<dbReference type="OrthoDB" id="9799751at2"/>
<dbReference type="Proteomes" id="UP000002453">
    <property type="component" value="Chromosome"/>
</dbReference>
<dbReference type="GO" id="GO:0005829">
    <property type="term" value="C:cytosol"/>
    <property type="evidence" value="ECO:0007669"/>
    <property type="project" value="TreeGrafter"/>
</dbReference>
<dbReference type="GO" id="GO:0003723">
    <property type="term" value="F:RNA binding"/>
    <property type="evidence" value="ECO:0007669"/>
    <property type="project" value="UniProtKB-UniRule"/>
</dbReference>
<dbReference type="GO" id="GO:0006355">
    <property type="term" value="P:regulation of DNA-templated transcription"/>
    <property type="evidence" value="ECO:0007669"/>
    <property type="project" value="InterPro"/>
</dbReference>
<dbReference type="GO" id="GO:0043487">
    <property type="term" value="P:regulation of RNA stability"/>
    <property type="evidence" value="ECO:0007669"/>
    <property type="project" value="TreeGrafter"/>
</dbReference>
<dbReference type="GO" id="GO:0045974">
    <property type="term" value="P:regulation of translation, ncRNA-mediated"/>
    <property type="evidence" value="ECO:0007669"/>
    <property type="project" value="TreeGrafter"/>
</dbReference>
<dbReference type="CDD" id="cd01716">
    <property type="entry name" value="Hfq"/>
    <property type="match status" value="1"/>
</dbReference>
<dbReference type="Gene3D" id="2.30.30.100">
    <property type="match status" value="1"/>
</dbReference>
<dbReference type="HAMAP" id="MF_00436">
    <property type="entry name" value="Hfq"/>
    <property type="match status" value="1"/>
</dbReference>
<dbReference type="InterPro" id="IPR005001">
    <property type="entry name" value="Hfq"/>
</dbReference>
<dbReference type="InterPro" id="IPR010920">
    <property type="entry name" value="LSM_dom_sf"/>
</dbReference>
<dbReference type="InterPro" id="IPR047575">
    <property type="entry name" value="Sm"/>
</dbReference>
<dbReference type="NCBIfam" id="TIGR02383">
    <property type="entry name" value="Hfq"/>
    <property type="match status" value="1"/>
</dbReference>
<dbReference type="NCBIfam" id="NF001602">
    <property type="entry name" value="PRK00395.1"/>
    <property type="match status" value="1"/>
</dbReference>
<dbReference type="PANTHER" id="PTHR34772">
    <property type="entry name" value="RNA-BINDING PROTEIN HFQ"/>
    <property type="match status" value="1"/>
</dbReference>
<dbReference type="PANTHER" id="PTHR34772:SF1">
    <property type="entry name" value="RNA-BINDING PROTEIN HFQ"/>
    <property type="match status" value="1"/>
</dbReference>
<dbReference type="Pfam" id="PF17209">
    <property type="entry name" value="Hfq"/>
    <property type="match status" value="1"/>
</dbReference>
<dbReference type="SUPFAM" id="SSF50182">
    <property type="entry name" value="Sm-like ribonucleoproteins"/>
    <property type="match status" value="1"/>
</dbReference>
<dbReference type="PROSITE" id="PS52002">
    <property type="entry name" value="SM"/>
    <property type="match status" value="1"/>
</dbReference>
<comment type="function">
    <text evidence="1">RNA chaperone that binds small regulatory RNA (sRNAs) and mRNAs to facilitate mRNA translational regulation in response to envelope stress, environmental stress and changes in metabolite concentrations. Also binds with high specificity to tRNAs.</text>
</comment>
<comment type="subunit">
    <text evidence="1">Homohexamer.</text>
</comment>
<comment type="similarity">
    <text evidence="1">Belongs to the Hfq family.</text>
</comment>
<evidence type="ECO:0000255" key="1">
    <source>
        <dbReference type="HAMAP-Rule" id="MF_00436"/>
    </source>
</evidence>
<evidence type="ECO:0000255" key="2">
    <source>
        <dbReference type="PROSITE-ProRule" id="PRU01346"/>
    </source>
</evidence>
<sequence length="84" mass="9839">MAEKFNLQDRFLNILRTNKIPVKVYLVNGFQTKGIIRSFDNFTMLLENGSQQNLIYKHAVSTIMPESFVKLTKQQNEESENEEK</sequence>